<keyword id="KW-0997">Cell inner membrane</keyword>
<keyword id="KW-1003">Cell membrane</keyword>
<keyword id="KW-0406">Ion transport</keyword>
<keyword id="KW-0472">Membrane</keyword>
<keyword id="KW-0630">Potassium</keyword>
<keyword id="KW-0633">Potassium transport</keyword>
<keyword id="KW-0812">Transmembrane</keyword>
<keyword id="KW-1133">Transmembrane helix</keyword>
<keyword id="KW-0813">Transport</keyword>
<organism>
    <name type="scientific">Francisella philomiragia subsp. philomiragia (strain ATCC 25017 / CCUG 19701 / FSC 153 / O#319-036)</name>
    <dbReference type="NCBI Taxonomy" id="484022"/>
    <lineage>
        <taxon>Bacteria</taxon>
        <taxon>Pseudomonadati</taxon>
        <taxon>Pseudomonadota</taxon>
        <taxon>Gammaproteobacteria</taxon>
        <taxon>Thiotrichales</taxon>
        <taxon>Francisellaceae</taxon>
        <taxon>Francisella</taxon>
    </lineage>
</organism>
<comment type="function">
    <text evidence="1">Part of the high-affinity ATP-driven potassium transport (or Kdp) system, which catalyzes the hydrolysis of ATP coupled with the electrogenic transport of potassium into the cytoplasm. This subunit binds the periplasmic potassium ions and delivers the ions to the membrane domain of KdpB through an intramembrane tunnel.</text>
</comment>
<comment type="subunit">
    <text evidence="1">The system is composed of three essential subunits: KdpA, KdpB and KdpC.</text>
</comment>
<comment type="subcellular location">
    <subcellularLocation>
        <location evidence="1">Cell inner membrane</location>
        <topology evidence="1">Multi-pass membrane protein</topology>
    </subcellularLocation>
</comment>
<comment type="similarity">
    <text evidence="1">Belongs to the KdpA family.</text>
</comment>
<accession>B0TWK0</accession>
<evidence type="ECO:0000255" key="1">
    <source>
        <dbReference type="HAMAP-Rule" id="MF_00275"/>
    </source>
</evidence>
<dbReference type="EMBL" id="CP000937">
    <property type="protein sequence ID" value="ABZ87108.1"/>
    <property type="molecule type" value="Genomic_DNA"/>
</dbReference>
<dbReference type="SMR" id="B0TWK0"/>
<dbReference type="KEGG" id="fph:Fphi_0885"/>
<dbReference type="eggNOG" id="COG2060">
    <property type="taxonomic scope" value="Bacteria"/>
</dbReference>
<dbReference type="HOGENOM" id="CLU_018614_3_0_6"/>
<dbReference type="GO" id="GO:0005886">
    <property type="term" value="C:plasma membrane"/>
    <property type="evidence" value="ECO:0007669"/>
    <property type="project" value="UniProtKB-SubCell"/>
</dbReference>
<dbReference type="GO" id="GO:0008556">
    <property type="term" value="F:P-type potassium transmembrane transporter activity"/>
    <property type="evidence" value="ECO:0007669"/>
    <property type="project" value="InterPro"/>
</dbReference>
<dbReference type="GO" id="GO:0030955">
    <property type="term" value="F:potassium ion binding"/>
    <property type="evidence" value="ECO:0007669"/>
    <property type="project" value="UniProtKB-UniRule"/>
</dbReference>
<dbReference type="HAMAP" id="MF_00275">
    <property type="entry name" value="KdpA"/>
    <property type="match status" value="1"/>
</dbReference>
<dbReference type="InterPro" id="IPR004623">
    <property type="entry name" value="KdpA"/>
</dbReference>
<dbReference type="NCBIfam" id="TIGR00680">
    <property type="entry name" value="kdpA"/>
    <property type="match status" value="1"/>
</dbReference>
<dbReference type="PANTHER" id="PTHR30607">
    <property type="entry name" value="POTASSIUM-TRANSPORTING ATPASE A CHAIN"/>
    <property type="match status" value="1"/>
</dbReference>
<dbReference type="PANTHER" id="PTHR30607:SF2">
    <property type="entry name" value="POTASSIUM-TRANSPORTING ATPASE POTASSIUM-BINDING SUBUNIT"/>
    <property type="match status" value="1"/>
</dbReference>
<dbReference type="Pfam" id="PF03814">
    <property type="entry name" value="KdpA"/>
    <property type="match status" value="1"/>
</dbReference>
<dbReference type="PIRSF" id="PIRSF001294">
    <property type="entry name" value="K_ATPaseA"/>
    <property type="match status" value="1"/>
</dbReference>
<reference key="1">
    <citation type="submission" date="2007-12" db="EMBL/GenBank/DDBJ databases">
        <title>Complete sequence of chromosome of Francisella philomiragia subsp. philomiragia ATCC 25017.</title>
        <authorList>
            <consortium name="US DOE Joint Genome Institute"/>
            <person name="Copeland A."/>
            <person name="Lucas S."/>
            <person name="Lapidus A."/>
            <person name="Barry K."/>
            <person name="Detter J.C."/>
            <person name="Glavina del Rio T."/>
            <person name="Hammon N."/>
            <person name="Israni S."/>
            <person name="Dalin E."/>
            <person name="Tice H."/>
            <person name="Pitluck S."/>
            <person name="Chain P."/>
            <person name="Malfatti S."/>
            <person name="Shin M."/>
            <person name="Vergez L."/>
            <person name="Schmutz J."/>
            <person name="Larimer F."/>
            <person name="Land M."/>
            <person name="Hauser L."/>
            <person name="Richardson P."/>
        </authorList>
    </citation>
    <scope>NUCLEOTIDE SEQUENCE [LARGE SCALE GENOMIC DNA]</scope>
    <source>
        <strain>ATCC 25017 / CCUG 19701 / FSC 153 / O#319-036</strain>
    </source>
</reference>
<protein>
    <recommendedName>
        <fullName evidence="1">Potassium-transporting ATPase potassium-binding subunit</fullName>
    </recommendedName>
    <alternativeName>
        <fullName evidence="1">ATP phosphohydrolase [potassium-transporting] A chain</fullName>
    </alternativeName>
    <alternativeName>
        <fullName evidence="1">Potassium-binding and translocating subunit A</fullName>
    </alternativeName>
    <alternativeName>
        <fullName evidence="1">Potassium-translocating ATPase A chain</fullName>
    </alternativeName>
</protein>
<sequence>MSYNFILFVVFIFTLVIITKPLGTYIFKVFNNERTWLDWFAKPFQRVYLLILGESSKKEQSAKSYFFSLLSFSIMAFIFVFVVLLLQGLLPFNPQEIKGMGFSQAFNTAVSFVTNTNWQSYSGETGVSHFSQMLALAVQNFVSAAVGLCVAIVLIRSVARHEATKVGNFWNDLGKAIFWILLPISIIIAIVYIFQGVPQNIMAYLHVHTLAGSDQIIAQGPIASQEAIKSLGTNGGGFFNANSAHPYENPTIITNYIQMVSIFAIAAALTYTFGKWVGNTKQGWMIFAVMLVLFVISLMVMTISELHGLDFLHSKNIQDIYGQVGHLSNMEGKETRFGIFNSTLYNTVSTSASDGGVNSVMDSYSAIGGMMAMLNMAIGEVIFGGIGAGFYGFFMFLMLAVFIGSLMIGRAPSFLGKRIEANDMKWTMFALLISPCCVLVFTGLAAVIPSVHQALTNSGAHGFSEILYAYISGSNNNGSAFAGLAANTSYLNITIALSMLIGRFGVIFAVMMLAGSLVKKKRSSQMSEISSLDTTSFIFSVLVFFTIVLIGGLTIFPALSLGPILDQLNLNF</sequence>
<proteinExistence type="inferred from homology"/>
<name>KDPA_FRAP2</name>
<feature type="chain" id="PRO_1000119341" description="Potassium-transporting ATPase potassium-binding subunit">
    <location>
        <begin position="1"/>
        <end position="572"/>
    </location>
</feature>
<feature type="transmembrane region" description="Helical" evidence="1">
    <location>
        <begin position="6"/>
        <end position="26"/>
    </location>
</feature>
<feature type="transmembrane region" description="Helical" evidence="1">
    <location>
        <begin position="66"/>
        <end position="86"/>
    </location>
</feature>
<feature type="transmembrane region" description="Helical" evidence="1">
    <location>
        <begin position="135"/>
        <end position="155"/>
    </location>
</feature>
<feature type="transmembrane region" description="Helical" evidence="1">
    <location>
        <begin position="177"/>
        <end position="197"/>
    </location>
</feature>
<feature type="transmembrane region" description="Helical" evidence="1">
    <location>
        <begin position="251"/>
        <end position="271"/>
    </location>
</feature>
<feature type="transmembrane region" description="Helical" evidence="1">
    <location>
        <begin position="283"/>
        <end position="303"/>
    </location>
</feature>
<feature type="transmembrane region" description="Helical" evidence="1">
    <location>
        <begin position="382"/>
        <end position="402"/>
    </location>
</feature>
<feature type="transmembrane region" description="Helical" evidence="1">
    <location>
        <begin position="428"/>
        <end position="448"/>
    </location>
</feature>
<feature type="transmembrane region" description="Helical" evidence="1">
    <location>
        <begin position="493"/>
        <end position="513"/>
    </location>
</feature>
<feature type="transmembrane region" description="Helical" evidence="1">
    <location>
        <begin position="537"/>
        <end position="557"/>
    </location>
</feature>
<gene>
    <name evidence="1" type="primary">kdpA</name>
    <name type="ordered locus">Fphi_0885</name>
</gene>